<comment type="function">
    <text evidence="1 5">Might act as an E3 ubiquitin-protein ligase, or as part of E3 complex, which accepts ubiquitin from specific E2 ubiquitin-conjugating enzymes and then transfers it to substrates.</text>
</comment>
<comment type="catalytic activity">
    <reaction evidence="2">
        <text>[E2 ubiquitin-conjugating enzyme]-S-ubiquitinyl-L-cysteine + [acceptor protein]-L-lysine = [E2 ubiquitin-conjugating enzyme]-L-cysteine + [acceptor protein]-N(6)-ubiquitinyl-L-lysine.</text>
        <dbReference type="EC" id="2.3.2.31"/>
    </reaction>
</comment>
<comment type="cofactor">
    <cofactor evidence="7">
        <name>Zn(2+)</name>
        <dbReference type="ChEBI" id="CHEBI:29105"/>
    </cofactor>
    <text evidence="7">Binds 4 Zn(2+) ions per subunit.</text>
</comment>
<comment type="pathway">
    <text>Protein modification; protein ubiquitination.</text>
</comment>
<comment type="alternative products">
    <event type="alternative splicing"/>
    <isoform>
        <id>Q9SKC3-1</id>
        <name>1</name>
        <sequence type="displayed"/>
    </isoform>
    <isoform>
        <id>Q9SKC3-2</id>
        <name>2</name>
        <sequence type="described" ref="VSP_036002"/>
    </isoform>
</comment>
<comment type="domain">
    <text evidence="2">Members of the RBR family are atypical E3 ligases. They interact with the E2 conjugating enzyme UBE2L3 and function like HECT-type E3 enzymes: they bind E2s via the first RING-type zinc finger, but require an obligate trans-thiolation step during the ubiquitin transfer, requiring a conserved active site Cys residue in the second RING-type zinc finger. The active site probably forms a thioester intermediate with ubiquitin taken from the active-site cysteine of the E2 before ultimately transferring it to a Lys residue on the substrate.</text>
</comment>
<comment type="similarity">
    <text evidence="7">Belongs to the RBR family. Ariadne subfamily.</text>
</comment>
<comment type="sequence caution" evidence="7">
    <conflict type="erroneous termination">
        <sequence resource="EMBL-CDS" id="ABK28520"/>
    </conflict>
    <text>Extended C-terminus.</text>
</comment>
<protein>
    <recommendedName>
        <fullName>Probable E3 ubiquitin-protein ligase ARI9</fullName>
        <ecNumber evidence="2">2.3.2.31</ecNumber>
    </recommendedName>
    <alternativeName>
        <fullName>ARIADNE-like protein ARI9</fullName>
    </alternativeName>
    <alternativeName>
        <fullName>Protein ariadne homolog 9</fullName>
    </alternativeName>
    <alternativeName>
        <fullName evidence="7">RING-type E3 ubiquitin transferase ARI9</fullName>
    </alternativeName>
</protein>
<accession>Q9SKC3</accession>
<accession>A0MER2</accession>
<sequence>MDFSDDDMIDNKSGEENYSYGGGNESDDYNDVVDTIIPSEKSYVILKEEDILKLQRDDIERVSSILSLSQVEVIVLLLHYNWCVSKVEDEWFTDEERIRKAVGLLKEPVVDFNGGEKDKKCRKVNIQCGICFESYTREEIARVSCGHPYCKTCWAGYITTKIEDGPGCLRVKCPEPSCSAAVGKDMIEDVTETKVNEKYSRYILRSYVEDGKKIKWCPSPGCGYAVEFGGSESSSYDVSCLCSYRFCWNCSEDAHSPVDCDTVSKWIFKNQDESENKNWMLANSKPCPECKRPIEKNDGCNHMTCSAPCGHEFCWICLKAYRRHSGACNRFVVEQAESKRALLQSEIKRYTHYYVRWAENQSSRLKAMRDLEKLQSVQLKELSDNQCTSETQLQFTVDAWLQIIECRRVLKWTYAYGYYLQDLPKRKFFEYLQGEAESGLERLHHCAENELKQFFIKSEDPSDTFNAFRMKLTGLTTVTKTYFENLVKALENGLVDVTHNEFPPDNETKSTQEKYEEYQDYEDDFLETQRLYDEALLSGCYYD</sequence>
<organism>
    <name type="scientific">Arabidopsis thaliana</name>
    <name type="common">Mouse-ear cress</name>
    <dbReference type="NCBI Taxonomy" id="3702"/>
    <lineage>
        <taxon>Eukaryota</taxon>
        <taxon>Viridiplantae</taxon>
        <taxon>Streptophyta</taxon>
        <taxon>Embryophyta</taxon>
        <taxon>Tracheophyta</taxon>
        <taxon>Spermatophyta</taxon>
        <taxon>Magnoliopsida</taxon>
        <taxon>eudicotyledons</taxon>
        <taxon>Gunneridae</taxon>
        <taxon>Pentapetalae</taxon>
        <taxon>rosids</taxon>
        <taxon>malvids</taxon>
        <taxon>Brassicales</taxon>
        <taxon>Brassicaceae</taxon>
        <taxon>Camelineae</taxon>
        <taxon>Arabidopsis</taxon>
    </lineage>
</organism>
<feature type="chain" id="PRO_0000356202" description="Probable E3 ubiquitin-protein ligase ARI9">
    <location>
        <begin position="1"/>
        <end position="543"/>
    </location>
</feature>
<feature type="zinc finger region" description="RING-type 1" evidence="3">
    <location>
        <begin position="128"/>
        <end position="178"/>
    </location>
</feature>
<feature type="zinc finger region" description="IBR-type" evidence="3">
    <location>
        <begin position="197"/>
        <end position="260"/>
    </location>
</feature>
<feature type="zinc finger region" description="RING-type 2; atypical" evidence="3">
    <location>
        <begin position="287"/>
        <end position="317"/>
    </location>
</feature>
<feature type="region of interest" description="Disordered" evidence="4">
    <location>
        <begin position="1"/>
        <end position="26"/>
    </location>
</feature>
<feature type="region of interest" description="TRIAD supradomain" evidence="3">
    <location>
        <begin position="124"/>
        <end position="332"/>
    </location>
</feature>
<feature type="active site" evidence="3">
    <location>
        <position position="300"/>
    </location>
</feature>
<feature type="binding site" evidence="3">
    <location>
        <position position="128"/>
    </location>
    <ligand>
        <name>Zn(2+)</name>
        <dbReference type="ChEBI" id="CHEBI:29105"/>
        <label>1</label>
    </ligand>
</feature>
<feature type="binding site" evidence="3">
    <location>
        <position position="131"/>
    </location>
    <ligand>
        <name>Zn(2+)</name>
        <dbReference type="ChEBI" id="CHEBI:29105"/>
        <label>1</label>
    </ligand>
</feature>
<feature type="binding site" evidence="3">
    <location>
        <position position="145"/>
    </location>
    <ligand>
        <name>Zn(2+)</name>
        <dbReference type="ChEBI" id="CHEBI:29105"/>
        <label>2</label>
    </ligand>
</feature>
<feature type="binding site" evidence="3">
    <location>
        <position position="147"/>
    </location>
    <ligand>
        <name>Zn(2+)</name>
        <dbReference type="ChEBI" id="CHEBI:29105"/>
        <label>2</label>
    </ligand>
</feature>
<feature type="binding site" evidence="3">
    <location>
        <position position="150"/>
    </location>
    <ligand>
        <name>Zn(2+)</name>
        <dbReference type="ChEBI" id="CHEBI:29105"/>
        <label>1</label>
    </ligand>
</feature>
<feature type="binding site" evidence="3">
    <location>
        <position position="153"/>
    </location>
    <ligand>
        <name>Zn(2+)</name>
        <dbReference type="ChEBI" id="CHEBI:29105"/>
        <label>1</label>
    </ligand>
</feature>
<feature type="binding site" evidence="3">
    <location>
        <position position="173"/>
    </location>
    <ligand>
        <name>Zn(2+)</name>
        <dbReference type="ChEBI" id="CHEBI:29105"/>
        <label>2</label>
    </ligand>
</feature>
<feature type="binding site" evidence="3">
    <location>
        <position position="178"/>
    </location>
    <ligand>
        <name>Zn(2+)</name>
        <dbReference type="ChEBI" id="CHEBI:29105"/>
        <label>2</label>
    </ligand>
</feature>
<feature type="binding site" evidence="3">
    <location>
        <position position="217"/>
    </location>
    <ligand>
        <name>Zn(2+)</name>
        <dbReference type="ChEBI" id="CHEBI:29105"/>
        <label>3</label>
    </ligand>
</feature>
<feature type="binding site" evidence="3">
    <location>
        <position position="222"/>
    </location>
    <ligand>
        <name>Zn(2+)</name>
        <dbReference type="ChEBI" id="CHEBI:29105"/>
        <label>3</label>
    </ligand>
</feature>
<feature type="binding site" evidence="3">
    <location>
        <position position="240"/>
    </location>
    <ligand>
        <name>Zn(2+)</name>
        <dbReference type="ChEBI" id="CHEBI:29105"/>
        <label>3</label>
    </ligand>
</feature>
<feature type="binding site" evidence="3">
    <location>
        <position position="242"/>
    </location>
    <ligand>
        <name>Zn(2+)</name>
        <dbReference type="ChEBI" id="CHEBI:29105"/>
        <label>3</label>
    </ligand>
</feature>
<feature type="binding site" evidence="3">
    <location>
        <position position="247"/>
    </location>
    <ligand>
        <name>Zn(2+)</name>
        <dbReference type="ChEBI" id="CHEBI:29105"/>
        <label>4</label>
    </ligand>
</feature>
<feature type="binding site" evidence="3">
    <location>
        <position position="250"/>
    </location>
    <ligand>
        <name>Zn(2+)</name>
        <dbReference type="ChEBI" id="CHEBI:29105"/>
        <label>4</label>
    </ligand>
</feature>
<feature type="binding site" evidence="3">
    <location>
        <position position="255"/>
    </location>
    <ligand>
        <name>Zn(2+)</name>
        <dbReference type="ChEBI" id="CHEBI:29105"/>
        <label>4</label>
    </ligand>
</feature>
<feature type="binding site" evidence="3">
    <location>
        <position position="260"/>
    </location>
    <ligand>
        <name>Zn(2+)</name>
        <dbReference type="ChEBI" id="CHEBI:29105"/>
        <label>4</label>
    </ligand>
</feature>
<feature type="binding site" evidence="3">
    <location>
        <position position="287"/>
    </location>
    <ligand>
        <name>Zn(2+)</name>
        <dbReference type="ChEBI" id="CHEBI:29105"/>
        <label>5</label>
    </ligand>
</feature>
<feature type="binding site" evidence="3">
    <location>
        <position position="290"/>
    </location>
    <ligand>
        <name>Zn(2+)</name>
        <dbReference type="ChEBI" id="CHEBI:29105"/>
        <label>5</label>
    </ligand>
</feature>
<feature type="binding site" evidence="3">
    <location>
        <position position="305"/>
    </location>
    <ligand>
        <name>Zn(2+)</name>
        <dbReference type="ChEBI" id="CHEBI:29105"/>
        <label>5</label>
    </ligand>
</feature>
<feature type="binding site" evidence="3">
    <location>
        <position position="309"/>
    </location>
    <ligand>
        <name>Zn(2+)</name>
        <dbReference type="ChEBI" id="CHEBI:29105"/>
        <label>5</label>
    </ligand>
</feature>
<feature type="binding site" evidence="3">
    <location>
        <position position="314"/>
    </location>
    <ligand>
        <name>Zn(2+)</name>
        <dbReference type="ChEBI" id="CHEBI:29105"/>
        <label>6</label>
    </ligand>
</feature>
<feature type="binding site" evidence="3">
    <location>
        <position position="317"/>
    </location>
    <ligand>
        <name>Zn(2+)</name>
        <dbReference type="ChEBI" id="CHEBI:29105"/>
        <label>6</label>
    </ligand>
</feature>
<feature type="binding site" evidence="3">
    <location>
        <position position="324"/>
    </location>
    <ligand>
        <name>Zn(2+)</name>
        <dbReference type="ChEBI" id="CHEBI:29105"/>
        <label>6</label>
    </ligand>
</feature>
<feature type="binding site" evidence="3">
    <location>
        <position position="328"/>
    </location>
    <ligand>
        <name>Zn(2+)</name>
        <dbReference type="ChEBI" id="CHEBI:29105"/>
        <label>6</label>
    </ligand>
</feature>
<feature type="splice variant" id="VSP_036002" description="In isoform 2." evidence="6">
    <original>IEDGPGCLRVKCPEPSCSAAVGKDMIEDVTETKV</original>
    <variation>V</variation>
    <location>
        <begin position="162"/>
        <end position="195"/>
    </location>
</feature>
<reference key="1">
    <citation type="journal article" date="2003" name="Plant Physiol.">
        <title>Identification and characterization of the ARIADNE gene family in Arabidopsis. A group of putative E3 ligases.</title>
        <authorList>
            <person name="Mladek C."/>
            <person name="Guger K."/>
            <person name="Hauser M.-T."/>
        </authorList>
    </citation>
    <scope>NUCLEOTIDE SEQUENCE [GENOMIC DNA]</scope>
    <scope>NOMENCLATURE</scope>
    <scope>GENE FAMILY</scope>
    <source>
        <strain>cv. Columbia</strain>
    </source>
</reference>
<reference key="2">
    <citation type="journal article" date="1999" name="Nature">
        <title>Sequence and analysis of chromosome 2 of the plant Arabidopsis thaliana.</title>
        <authorList>
            <person name="Lin X."/>
            <person name="Kaul S."/>
            <person name="Rounsley S.D."/>
            <person name="Shea T.P."/>
            <person name="Benito M.-I."/>
            <person name="Town C.D."/>
            <person name="Fujii C.Y."/>
            <person name="Mason T.M."/>
            <person name="Bowman C.L."/>
            <person name="Barnstead M.E."/>
            <person name="Feldblyum T.V."/>
            <person name="Buell C.R."/>
            <person name="Ketchum K.A."/>
            <person name="Lee J.J."/>
            <person name="Ronning C.M."/>
            <person name="Koo H.L."/>
            <person name="Moffat K.S."/>
            <person name="Cronin L.A."/>
            <person name="Shen M."/>
            <person name="Pai G."/>
            <person name="Van Aken S."/>
            <person name="Umayam L."/>
            <person name="Tallon L.J."/>
            <person name="Gill J.E."/>
            <person name="Adams M.D."/>
            <person name="Carrera A.J."/>
            <person name="Creasy T.H."/>
            <person name="Goodman H.M."/>
            <person name="Somerville C.R."/>
            <person name="Copenhaver G.P."/>
            <person name="Preuss D."/>
            <person name="Nierman W.C."/>
            <person name="White O."/>
            <person name="Eisen J.A."/>
            <person name="Salzberg S.L."/>
            <person name="Fraser C.M."/>
            <person name="Venter J.C."/>
        </authorList>
    </citation>
    <scope>NUCLEOTIDE SEQUENCE [LARGE SCALE GENOMIC DNA]</scope>
    <source>
        <strain>cv. Columbia</strain>
    </source>
</reference>
<reference key="3">
    <citation type="journal article" date="2017" name="Plant J.">
        <title>Araport11: a complete reannotation of the Arabidopsis thaliana reference genome.</title>
        <authorList>
            <person name="Cheng C.Y."/>
            <person name="Krishnakumar V."/>
            <person name="Chan A.P."/>
            <person name="Thibaud-Nissen F."/>
            <person name="Schobel S."/>
            <person name="Town C.D."/>
        </authorList>
    </citation>
    <scope>GENOME REANNOTATION</scope>
    <source>
        <strain>cv. Columbia</strain>
    </source>
</reference>
<reference key="4">
    <citation type="journal article" date="2006" name="Plant Biotechnol. J.">
        <title>Simultaneous high-throughput recombinational cloning of open reading frames in closed and open configurations.</title>
        <authorList>
            <person name="Underwood B.A."/>
            <person name="Vanderhaeghen R."/>
            <person name="Whitford R."/>
            <person name="Town C.D."/>
            <person name="Hilson P."/>
        </authorList>
    </citation>
    <scope>NUCLEOTIDE SEQUENCE [LARGE SCALE MRNA] (ISOFORMS 1 AND 2)</scope>
    <source>
        <strain>cv. Columbia</strain>
    </source>
</reference>
<reference key="5">
    <citation type="journal article" date="2002" name="Mol. Biol. Evol.">
        <title>Comparative genomics of the RBR family, including the Parkinson's disease-related gene parkin and the genes of the ariadne subfamily.</title>
        <authorList>
            <person name="Marin I."/>
            <person name="Ferrus A."/>
        </authorList>
    </citation>
    <scope>FUNCTION</scope>
</reference>
<name>ARI9_ARATH</name>
<evidence type="ECO:0000250" key="1"/>
<evidence type="ECO:0000250" key="2">
    <source>
        <dbReference type="UniProtKB" id="Q9Y4X5"/>
    </source>
</evidence>
<evidence type="ECO:0000255" key="3">
    <source>
        <dbReference type="PROSITE-ProRule" id="PRU01221"/>
    </source>
</evidence>
<evidence type="ECO:0000256" key="4">
    <source>
        <dbReference type="SAM" id="MobiDB-lite"/>
    </source>
</evidence>
<evidence type="ECO:0000269" key="5">
    <source>
    </source>
</evidence>
<evidence type="ECO:0000303" key="6">
    <source>
    </source>
</evidence>
<evidence type="ECO:0000305" key="7"/>
<keyword id="KW-0025">Alternative splicing</keyword>
<keyword id="KW-0479">Metal-binding</keyword>
<keyword id="KW-1185">Reference proteome</keyword>
<keyword id="KW-0677">Repeat</keyword>
<keyword id="KW-0808">Transferase</keyword>
<keyword id="KW-0833">Ubl conjugation pathway</keyword>
<keyword id="KW-0862">Zinc</keyword>
<keyword id="KW-0863">Zinc-finger</keyword>
<gene>
    <name type="primary">ARI9</name>
    <name type="ordered locus">At2g31770</name>
    <name type="ORF">F20M17.19</name>
</gene>
<dbReference type="EC" id="2.3.2.31" evidence="2"/>
<dbReference type="EMBL" id="AJ510212">
    <property type="protein sequence ID" value="CAD52891.1"/>
    <property type="molecule type" value="Genomic_DNA"/>
</dbReference>
<dbReference type="EMBL" id="AC006533">
    <property type="protein sequence ID" value="AAD32295.1"/>
    <property type="molecule type" value="Genomic_DNA"/>
</dbReference>
<dbReference type="EMBL" id="CP002685">
    <property type="protein sequence ID" value="AEC08582.1"/>
    <property type="molecule type" value="Genomic_DNA"/>
</dbReference>
<dbReference type="EMBL" id="DQ446586">
    <property type="protein sequence ID" value="ABE65878.1"/>
    <property type="molecule type" value="mRNA"/>
</dbReference>
<dbReference type="EMBL" id="DQ653034">
    <property type="protein sequence ID" value="ABK28520.1"/>
    <property type="status" value="ALT_SEQ"/>
    <property type="molecule type" value="mRNA"/>
</dbReference>
<dbReference type="PIR" id="H84724">
    <property type="entry name" value="H84724"/>
</dbReference>
<dbReference type="RefSeq" id="NP_180736.1">
    <molecule id="Q9SKC3-1"/>
    <property type="nucleotide sequence ID" value="NM_128735.1"/>
</dbReference>
<dbReference type="SMR" id="Q9SKC3"/>
<dbReference type="FunCoup" id="Q9SKC3">
    <property type="interactions" value="107"/>
</dbReference>
<dbReference type="STRING" id="3702.Q9SKC3"/>
<dbReference type="PaxDb" id="3702-AT2G31770.1"/>
<dbReference type="EnsemblPlants" id="AT2G31770.1">
    <molecule id="Q9SKC3-1"/>
    <property type="protein sequence ID" value="AT2G31770.1"/>
    <property type="gene ID" value="AT2G31770"/>
</dbReference>
<dbReference type="GeneID" id="817734"/>
<dbReference type="Gramene" id="AT2G31770.1">
    <molecule id="Q9SKC3-1"/>
    <property type="protein sequence ID" value="AT2G31770.1"/>
    <property type="gene ID" value="AT2G31770"/>
</dbReference>
<dbReference type="KEGG" id="ath:AT2G31770"/>
<dbReference type="Araport" id="AT2G31770"/>
<dbReference type="TAIR" id="AT2G31770">
    <property type="gene designation" value="ARI9"/>
</dbReference>
<dbReference type="eggNOG" id="KOG1815">
    <property type="taxonomic scope" value="Eukaryota"/>
</dbReference>
<dbReference type="HOGENOM" id="CLU_009823_3_1_1"/>
<dbReference type="InParanoid" id="Q9SKC3"/>
<dbReference type="OMA" id="NWMLANS"/>
<dbReference type="OrthoDB" id="10009520at2759"/>
<dbReference type="PhylomeDB" id="Q9SKC3"/>
<dbReference type="UniPathway" id="UPA00143"/>
<dbReference type="PRO" id="PR:Q9SKC3"/>
<dbReference type="Proteomes" id="UP000006548">
    <property type="component" value="Chromosome 2"/>
</dbReference>
<dbReference type="ExpressionAtlas" id="Q9SKC3">
    <property type="expression patterns" value="baseline and differential"/>
</dbReference>
<dbReference type="GO" id="GO:0004842">
    <property type="term" value="F:ubiquitin-protein transferase activity"/>
    <property type="evidence" value="ECO:0007669"/>
    <property type="project" value="InterPro"/>
</dbReference>
<dbReference type="GO" id="GO:0008270">
    <property type="term" value="F:zinc ion binding"/>
    <property type="evidence" value="ECO:0007669"/>
    <property type="project" value="UniProtKB-KW"/>
</dbReference>
<dbReference type="GO" id="GO:0016567">
    <property type="term" value="P:protein ubiquitination"/>
    <property type="evidence" value="ECO:0007669"/>
    <property type="project" value="UniProtKB-UniPathway"/>
</dbReference>
<dbReference type="CDD" id="cd20346">
    <property type="entry name" value="BRcat_RBR_ANKIB1"/>
    <property type="match status" value="1"/>
</dbReference>
<dbReference type="CDD" id="cd23141">
    <property type="entry name" value="RING-HC_ARI6-like"/>
    <property type="match status" value="1"/>
</dbReference>
<dbReference type="FunFam" id="1.20.120.1750:FF:000027">
    <property type="entry name" value="RBR-type E3 ubiquitin transferase"/>
    <property type="match status" value="1"/>
</dbReference>
<dbReference type="FunFam" id="3.30.40.10:FF:000019">
    <property type="entry name" value="RBR-type E3 ubiquitin transferase"/>
    <property type="match status" value="1"/>
</dbReference>
<dbReference type="Gene3D" id="1.20.120.1750">
    <property type="match status" value="1"/>
</dbReference>
<dbReference type="Gene3D" id="3.30.40.10">
    <property type="entry name" value="Zinc/RING finger domain, C3HC4 (zinc finger)"/>
    <property type="match status" value="1"/>
</dbReference>
<dbReference type="InterPro" id="IPR031127">
    <property type="entry name" value="E3_UB_ligase_RBR"/>
</dbReference>
<dbReference type="InterPro" id="IPR002867">
    <property type="entry name" value="IBR_dom"/>
</dbReference>
<dbReference type="InterPro" id="IPR044066">
    <property type="entry name" value="TRIAD_supradom"/>
</dbReference>
<dbReference type="InterPro" id="IPR001841">
    <property type="entry name" value="Znf_RING"/>
</dbReference>
<dbReference type="InterPro" id="IPR013083">
    <property type="entry name" value="Znf_RING/FYVE/PHD"/>
</dbReference>
<dbReference type="InterPro" id="IPR017907">
    <property type="entry name" value="Znf_RING_CS"/>
</dbReference>
<dbReference type="PANTHER" id="PTHR11685">
    <property type="entry name" value="RBR FAMILY RING FINGER AND IBR DOMAIN-CONTAINING"/>
    <property type="match status" value="1"/>
</dbReference>
<dbReference type="Pfam" id="PF01485">
    <property type="entry name" value="IBR"/>
    <property type="match status" value="1"/>
</dbReference>
<dbReference type="Pfam" id="PF22191">
    <property type="entry name" value="IBR_1"/>
    <property type="match status" value="1"/>
</dbReference>
<dbReference type="SMART" id="SM00647">
    <property type="entry name" value="IBR"/>
    <property type="match status" value="2"/>
</dbReference>
<dbReference type="SUPFAM" id="SSF57850">
    <property type="entry name" value="RING/U-box"/>
    <property type="match status" value="3"/>
</dbReference>
<dbReference type="PROSITE" id="PS51873">
    <property type="entry name" value="TRIAD"/>
    <property type="match status" value="1"/>
</dbReference>
<dbReference type="PROSITE" id="PS00518">
    <property type="entry name" value="ZF_RING_1"/>
    <property type="match status" value="1"/>
</dbReference>
<dbReference type="PROSITE" id="PS50089">
    <property type="entry name" value="ZF_RING_2"/>
    <property type="match status" value="1"/>
</dbReference>
<proteinExistence type="evidence at transcript level"/>